<feature type="chain" id="PRO_0000149426" description="Adenine phosphoribosyltransferase">
    <location>
        <begin position="1"/>
        <end position="180"/>
    </location>
</feature>
<gene>
    <name evidence="1" type="primary">apt</name>
    <name type="ordered locus">PM0363</name>
</gene>
<protein>
    <recommendedName>
        <fullName evidence="1">Adenine phosphoribosyltransferase</fullName>
        <shortName evidence="1">APRT</shortName>
        <ecNumber evidence="1">2.4.2.7</ecNumber>
    </recommendedName>
</protein>
<comment type="function">
    <text evidence="1">Catalyzes a salvage reaction resulting in the formation of AMP, that is energically less costly than de novo synthesis.</text>
</comment>
<comment type="catalytic activity">
    <reaction evidence="1">
        <text>AMP + diphosphate = 5-phospho-alpha-D-ribose 1-diphosphate + adenine</text>
        <dbReference type="Rhea" id="RHEA:16609"/>
        <dbReference type="ChEBI" id="CHEBI:16708"/>
        <dbReference type="ChEBI" id="CHEBI:33019"/>
        <dbReference type="ChEBI" id="CHEBI:58017"/>
        <dbReference type="ChEBI" id="CHEBI:456215"/>
        <dbReference type="EC" id="2.4.2.7"/>
    </reaction>
</comment>
<comment type="pathway">
    <text evidence="1">Purine metabolism; AMP biosynthesis via salvage pathway; AMP from adenine: step 1/1.</text>
</comment>
<comment type="subunit">
    <text evidence="1">Homodimer.</text>
</comment>
<comment type="subcellular location">
    <subcellularLocation>
        <location evidence="1">Cytoplasm</location>
    </subcellularLocation>
</comment>
<comment type="similarity">
    <text evidence="1">Belongs to the purine/pyrimidine phosphoribosyltransferase family.</text>
</comment>
<organism>
    <name type="scientific">Pasteurella multocida (strain Pm70)</name>
    <dbReference type="NCBI Taxonomy" id="272843"/>
    <lineage>
        <taxon>Bacteria</taxon>
        <taxon>Pseudomonadati</taxon>
        <taxon>Pseudomonadota</taxon>
        <taxon>Gammaproteobacteria</taxon>
        <taxon>Pasteurellales</taxon>
        <taxon>Pasteurellaceae</taxon>
        <taxon>Pasteurella</taxon>
    </lineage>
</organism>
<name>APT_PASMU</name>
<accession>P57841</accession>
<dbReference type="EC" id="2.4.2.7" evidence="1"/>
<dbReference type="EMBL" id="AE004439">
    <property type="protein sequence ID" value="AAK02447.1"/>
    <property type="molecule type" value="Genomic_DNA"/>
</dbReference>
<dbReference type="RefSeq" id="WP_005721540.1">
    <property type="nucleotide sequence ID" value="NC_002663.1"/>
</dbReference>
<dbReference type="SMR" id="P57841"/>
<dbReference type="STRING" id="272843.PM0363"/>
<dbReference type="EnsemblBacteria" id="AAK02447">
    <property type="protein sequence ID" value="AAK02447"/>
    <property type="gene ID" value="PM0363"/>
</dbReference>
<dbReference type="GeneID" id="77206150"/>
<dbReference type="KEGG" id="pmu:PM0363"/>
<dbReference type="HOGENOM" id="CLU_063339_3_0_6"/>
<dbReference type="OrthoDB" id="9803963at2"/>
<dbReference type="UniPathway" id="UPA00588">
    <property type="reaction ID" value="UER00646"/>
</dbReference>
<dbReference type="Proteomes" id="UP000000809">
    <property type="component" value="Chromosome"/>
</dbReference>
<dbReference type="GO" id="GO:0005829">
    <property type="term" value="C:cytosol"/>
    <property type="evidence" value="ECO:0007669"/>
    <property type="project" value="TreeGrafter"/>
</dbReference>
<dbReference type="GO" id="GO:0003999">
    <property type="term" value="F:adenine phosphoribosyltransferase activity"/>
    <property type="evidence" value="ECO:0007669"/>
    <property type="project" value="UniProtKB-UniRule"/>
</dbReference>
<dbReference type="GO" id="GO:0006168">
    <property type="term" value="P:adenine salvage"/>
    <property type="evidence" value="ECO:0007669"/>
    <property type="project" value="InterPro"/>
</dbReference>
<dbReference type="GO" id="GO:0044209">
    <property type="term" value="P:AMP salvage"/>
    <property type="evidence" value="ECO:0007669"/>
    <property type="project" value="UniProtKB-UniRule"/>
</dbReference>
<dbReference type="GO" id="GO:0006166">
    <property type="term" value="P:purine ribonucleoside salvage"/>
    <property type="evidence" value="ECO:0007669"/>
    <property type="project" value="UniProtKB-KW"/>
</dbReference>
<dbReference type="CDD" id="cd06223">
    <property type="entry name" value="PRTases_typeI"/>
    <property type="match status" value="1"/>
</dbReference>
<dbReference type="FunFam" id="3.40.50.2020:FF:000004">
    <property type="entry name" value="Adenine phosphoribosyltransferase"/>
    <property type="match status" value="1"/>
</dbReference>
<dbReference type="Gene3D" id="3.40.50.2020">
    <property type="match status" value="1"/>
</dbReference>
<dbReference type="HAMAP" id="MF_00004">
    <property type="entry name" value="Aden_phosphoribosyltr"/>
    <property type="match status" value="1"/>
</dbReference>
<dbReference type="InterPro" id="IPR005764">
    <property type="entry name" value="Ade_phspho_trans"/>
</dbReference>
<dbReference type="InterPro" id="IPR050120">
    <property type="entry name" value="Adenine_PRTase"/>
</dbReference>
<dbReference type="InterPro" id="IPR000836">
    <property type="entry name" value="PRibTrfase_dom"/>
</dbReference>
<dbReference type="InterPro" id="IPR029057">
    <property type="entry name" value="PRTase-like"/>
</dbReference>
<dbReference type="NCBIfam" id="TIGR01090">
    <property type="entry name" value="apt"/>
    <property type="match status" value="1"/>
</dbReference>
<dbReference type="NCBIfam" id="NF002632">
    <property type="entry name" value="PRK02304.1-1"/>
    <property type="match status" value="1"/>
</dbReference>
<dbReference type="NCBIfam" id="NF002634">
    <property type="entry name" value="PRK02304.1-3"/>
    <property type="match status" value="1"/>
</dbReference>
<dbReference type="NCBIfam" id="NF002636">
    <property type="entry name" value="PRK02304.1-5"/>
    <property type="match status" value="1"/>
</dbReference>
<dbReference type="PANTHER" id="PTHR11776">
    <property type="entry name" value="ADENINE PHOSPHORIBOSYLTRANSFERASE"/>
    <property type="match status" value="1"/>
</dbReference>
<dbReference type="PANTHER" id="PTHR11776:SF7">
    <property type="entry name" value="PHOSPHORIBOSYLTRANSFERASE DOMAIN-CONTAINING PROTEIN"/>
    <property type="match status" value="1"/>
</dbReference>
<dbReference type="Pfam" id="PF00156">
    <property type="entry name" value="Pribosyltran"/>
    <property type="match status" value="1"/>
</dbReference>
<dbReference type="SUPFAM" id="SSF53271">
    <property type="entry name" value="PRTase-like"/>
    <property type="match status" value="1"/>
</dbReference>
<dbReference type="PROSITE" id="PS00103">
    <property type="entry name" value="PUR_PYR_PR_TRANSFER"/>
    <property type="match status" value="1"/>
</dbReference>
<proteinExistence type="inferred from homology"/>
<sequence length="180" mass="19537">MNDKLALIKSSIKSIPNHPKEGIIFRDITSLLEVPAAFQTVVDLFVTRYKEKGITKVLGTESRGFIFGAPVALALNVPFVLVRKPGKLPRETISQTYQLEYGQDTLEIHTDAIHAQDKVLIIDDLLATGGTVEATVKLVQRLGGDVQDAAFVINLPDLGGEARLNALGIDAYTLVDFAGH</sequence>
<evidence type="ECO:0000255" key="1">
    <source>
        <dbReference type="HAMAP-Rule" id="MF_00004"/>
    </source>
</evidence>
<reference key="1">
    <citation type="journal article" date="2001" name="Proc. Natl. Acad. Sci. U.S.A.">
        <title>Complete genomic sequence of Pasteurella multocida Pm70.</title>
        <authorList>
            <person name="May B.J."/>
            <person name="Zhang Q."/>
            <person name="Li L.L."/>
            <person name="Paustian M.L."/>
            <person name="Whittam T.S."/>
            <person name="Kapur V."/>
        </authorList>
    </citation>
    <scope>NUCLEOTIDE SEQUENCE [LARGE SCALE GENOMIC DNA]</scope>
    <source>
        <strain>Pm70</strain>
    </source>
</reference>
<keyword id="KW-0963">Cytoplasm</keyword>
<keyword id="KW-0328">Glycosyltransferase</keyword>
<keyword id="KW-0660">Purine salvage</keyword>
<keyword id="KW-1185">Reference proteome</keyword>
<keyword id="KW-0808">Transferase</keyword>